<keyword id="KW-0963">Cytoplasm</keyword>
<keyword id="KW-0251">Elongation factor</keyword>
<keyword id="KW-0342">GTP-binding</keyword>
<keyword id="KW-0547">Nucleotide-binding</keyword>
<keyword id="KW-0648">Protein biosynthesis</keyword>
<organism>
    <name type="scientific">Streptomyces laurentii</name>
    <dbReference type="NCBI Taxonomy" id="39478"/>
    <lineage>
        <taxon>Bacteria</taxon>
        <taxon>Bacillati</taxon>
        <taxon>Actinomycetota</taxon>
        <taxon>Actinomycetes</taxon>
        <taxon>Kitasatosporales</taxon>
        <taxon>Streptomycetaceae</taxon>
        <taxon>Streptomyces</taxon>
    </lineage>
</organism>
<sequence length="31" mass="3284">DQPVAMEEGLKFAIREGGRTVGAGQVVKIVK</sequence>
<name>EFTU_STRLU</name>
<evidence type="ECO:0000250" key="1"/>
<evidence type="ECO:0000305" key="2"/>
<feature type="chain" id="PRO_0000091404" description="Elongation factor Tu">
    <location>
        <begin position="1" status="less than"/>
        <end position="31"/>
    </location>
</feature>
<feature type="non-terminal residue">
    <location>
        <position position="1"/>
    </location>
</feature>
<comment type="function">
    <text evidence="1">This protein promotes the GTP-dependent binding of aminoacyl-tRNA to the A-site of ribosomes during protein biosynthesis.</text>
</comment>
<comment type="subunit">
    <text>Monomer.</text>
</comment>
<comment type="subcellular location">
    <subcellularLocation>
        <location evidence="1">Cytoplasm</location>
    </subcellularLocation>
</comment>
<comment type="similarity">
    <text evidence="2">Belongs to the GTP-binding elongation factor family. EF-Tu/EF-1A subfamily.</text>
</comment>
<proteinExistence type="inferred from homology"/>
<accession>P52390</accession>
<gene>
    <name type="primary">tuf</name>
</gene>
<protein>
    <recommendedName>
        <fullName>Elongation factor Tu</fullName>
        <shortName>EF-Tu</shortName>
    </recommendedName>
</protein>
<dbReference type="EMBL" id="L39157">
    <property type="protein sequence ID" value="AAA99930.1"/>
    <property type="molecule type" value="Genomic_DNA"/>
</dbReference>
<dbReference type="SMR" id="P52390"/>
<dbReference type="GO" id="GO:0005737">
    <property type="term" value="C:cytoplasm"/>
    <property type="evidence" value="ECO:0007669"/>
    <property type="project" value="UniProtKB-SubCell"/>
</dbReference>
<dbReference type="GO" id="GO:0005525">
    <property type="term" value="F:GTP binding"/>
    <property type="evidence" value="ECO:0007669"/>
    <property type="project" value="UniProtKB-KW"/>
</dbReference>
<dbReference type="GO" id="GO:0003746">
    <property type="term" value="F:translation elongation factor activity"/>
    <property type="evidence" value="ECO:0007669"/>
    <property type="project" value="UniProtKB-KW"/>
</dbReference>
<dbReference type="Gene3D" id="2.40.30.10">
    <property type="entry name" value="Translation factors"/>
    <property type="match status" value="1"/>
</dbReference>
<dbReference type="InterPro" id="IPR009001">
    <property type="entry name" value="Transl_elong_EF1A/Init_IF2_C"/>
</dbReference>
<dbReference type="InterPro" id="IPR004160">
    <property type="entry name" value="Transl_elong_EFTu/EF1A_C"/>
</dbReference>
<dbReference type="Pfam" id="PF03143">
    <property type="entry name" value="GTP_EFTU_D3"/>
    <property type="match status" value="1"/>
</dbReference>
<dbReference type="SUPFAM" id="SSF50465">
    <property type="entry name" value="EF-Tu/eEF-1alpha/eIF2-gamma C-terminal domain"/>
    <property type="match status" value="1"/>
</dbReference>
<reference key="1">
    <citation type="journal article" date="1995" name="Gene">
        <title>The thiostrepton-resistance-encoding gene in Streptomyces laurentii is located within a cluster of ribosomal protein operons.</title>
        <authorList>
            <person name="Smith T.M."/>
            <person name="Jiang Y.F."/>
            <person name="Shipley P."/>
            <person name="Floss H.G."/>
        </authorList>
    </citation>
    <scope>NUCLEOTIDE SEQUENCE [GENOMIC DNA]</scope>
</reference>